<gene>
    <name evidence="1" type="primary">sthA</name>
    <name evidence="1" type="synonym">udhA</name>
    <name type="ordered locus">EC55989_4447</name>
</gene>
<accession>B7LA64</accession>
<dbReference type="EC" id="1.6.1.1" evidence="1"/>
<dbReference type="EMBL" id="CU928145">
    <property type="protein sequence ID" value="CAV01200.1"/>
    <property type="molecule type" value="Genomic_DNA"/>
</dbReference>
<dbReference type="RefSeq" id="WP_001120810.1">
    <property type="nucleotide sequence ID" value="NZ_CP028304.1"/>
</dbReference>
<dbReference type="SMR" id="B7LA64"/>
<dbReference type="GeneID" id="75203206"/>
<dbReference type="KEGG" id="eck:EC55989_4447"/>
<dbReference type="HOGENOM" id="CLU_016755_0_0_6"/>
<dbReference type="Proteomes" id="UP000000746">
    <property type="component" value="Chromosome"/>
</dbReference>
<dbReference type="GO" id="GO:0005829">
    <property type="term" value="C:cytosol"/>
    <property type="evidence" value="ECO:0007669"/>
    <property type="project" value="TreeGrafter"/>
</dbReference>
<dbReference type="GO" id="GO:0004148">
    <property type="term" value="F:dihydrolipoyl dehydrogenase (NADH) activity"/>
    <property type="evidence" value="ECO:0007669"/>
    <property type="project" value="TreeGrafter"/>
</dbReference>
<dbReference type="GO" id="GO:0050660">
    <property type="term" value="F:flavin adenine dinucleotide binding"/>
    <property type="evidence" value="ECO:0007669"/>
    <property type="project" value="TreeGrafter"/>
</dbReference>
<dbReference type="GO" id="GO:0003957">
    <property type="term" value="F:NAD(P)+ transhydrogenase (Si-specific) activity"/>
    <property type="evidence" value="ECO:0007669"/>
    <property type="project" value="UniProtKB-UniRule"/>
</dbReference>
<dbReference type="GO" id="GO:0006103">
    <property type="term" value="P:2-oxoglutarate metabolic process"/>
    <property type="evidence" value="ECO:0007669"/>
    <property type="project" value="TreeGrafter"/>
</dbReference>
<dbReference type="GO" id="GO:0006739">
    <property type="term" value="P:NADP metabolic process"/>
    <property type="evidence" value="ECO:0007669"/>
    <property type="project" value="UniProtKB-UniRule"/>
</dbReference>
<dbReference type="FunFam" id="3.30.390.30:FF:000002">
    <property type="entry name" value="Soluble pyridine nucleotide transhydrogenase"/>
    <property type="match status" value="1"/>
</dbReference>
<dbReference type="FunFam" id="3.50.50.60:FF:000008">
    <property type="entry name" value="Soluble pyridine nucleotide transhydrogenase"/>
    <property type="match status" value="1"/>
</dbReference>
<dbReference type="Gene3D" id="3.30.390.30">
    <property type="match status" value="1"/>
</dbReference>
<dbReference type="Gene3D" id="3.50.50.60">
    <property type="entry name" value="FAD/NAD(P)-binding domain"/>
    <property type="match status" value="2"/>
</dbReference>
<dbReference type="HAMAP" id="MF_00247">
    <property type="entry name" value="SthA"/>
    <property type="match status" value="1"/>
</dbReference>
<dbReference type="InterPro" id="IPR050151">
    <property type="entry name" value="Class-I_Pyr_Nuc-Dis_Oxidored"/>
</dbReference>
<dbReference type="InterPro" id="IPR036188">
    <property type="entry name" value="FAD/NAD-bd_sf"/>
</dbReference>
<dbReference type="InterPro" id="IPR023753">
    <property type="entry name" value="FAD/NAD-binding_dom"/>
</dbReference>
<dbReference type="InterPro" id="IPR016156">
    <property type="entry name" value="FAD/NAD-linked_Rdtase_dimer_sf"/>
</dbReference>
<dbReference type="InterPro" id="IPR001100">
    <property type="entry name" value="Pyr_nuc-diS_OxRdtase"/>
</dbReference>
<dbReference type="InterPro" id="IPR004099">
    <property type="entry name" value="Pyr_nucl-diS_OxRdtase_dimer"/>
</dbReference>
<dbReference type="InterPro" id="IPR022962">
    <property type="entry name" value="STH_gammaproteobact"/>
</dbReference>
<dbReference type="NCBIfam" id="NF003585">
    <property type="entry name" value="PRK05249.1"/>
    <property type="match status" value="1"/>
</dbReference>
<dbReference type="PANTHER" id="PTHR22912">
    <property type="entry name" value="DISULFIDE OXIDOREDUCTASE"/>
    <property type="match status" value="1"/>
</dbReference>
<dbReference type="PANTHER" id="PTHR22912:SF93">
    <property type="entry name" value="SOLUBLE PYRIDINE NUCLEOTIDE TRANSHYDROGENASE"/>
    <property type="match status" value="1"/>
</dbReference>
<dbReference type="Pfam" id="PF07992">
    <property type="entry name" value="Pyr_redox_2"/>
    <property type="match status" value="1"/>
</dbReference>
<dbReference type="Pfam" id="PF02852">
    <property type="entry name" value="Pyr_redox_dim"/>
    <property type="match status" value="1"/>
</dbReference>
<dbReference type="PIRSF" id="PIRSF000350">
    <property type="entry name" value="Mercury_reductase_MerA"/>
    <property type="match status" value="1"/>
</dbReference>
<dbReference type="PRINTS" id="PR00368">
    <property type="entry name" value="FADPNR"/>
</dbReference>
<dbReference type="PRINTS" id="PR00411">
    <property type="entry name" value="PNDRDTASEI"/>
</dbReference>
<dbReference type="SUPFAM" id="SSF51905">
    <property type="entry name" value="FAD/NAD(P)-binding domain"/>
    <property type="match status" value="1"/>
</dbReference>
<dbReference type="SUPFAM" id="SSF55424">
    <property type="entry name" value="FAD/NAD-linked reductases, dimerisation (C-terminal) domain"/>
    <property type="match status" value="1"/>
</dbReference>
<proteinExistence type="inferred from homology"/>
<reference key="1">
    <citation type="journal article" date="2009" name="PLoS Genet.">
        <title>Organised genome dynamics in the Escherichia coli species results in highly diverse adaptive paths.</title>
        <authorList>
            <person name="Touchon M."/>
            <person name="Hoede C."/>
            <person name="Tenaillon O."/>
            <person name="Barbe V."/>
            <person name="Baeriswyl S."/>
            <person name="Bidet P."/>
            <person name="Bingen E."/>
            <person name="Bonacorsi S."/>
            <person name="Bouchier C."/>
            <person name="Bouvet O."/>
            <person name="Calteau A."/>
            <person name="Chiapello H."/>
            <person name="Clermont O."/>
            <person name="Cruveiller S."/>
            <person name="Danchin A."/>
            <person name="Diard M."/>
            <person name="Dossat C."/>
            <person name="Karoui M.E."/>
            <person name="Frapy E."/>
            <person name="Garry L."/>
            <person name="Ghigo J.M."/>
            <person name="Gilles A.M."/>
            <person name="Johnson J."/>
            <person name="Le Bouguenec C."/>
            <person name="Lescat M."/>
            <person name="Mangenot S."/>
            <person name="Martinez-Jehanne V."/>
            <person name="Matic I."/>
            <person name="Nassif X."/>
            <person name="Oztas S."/>
            <person name="Petit M.A."/>
            <person name="Pichon C."/>
            <person name="Rouy Z."/>
            <person name="Ruf C.S."/>
            <person name="Schneider D."/>
            <person name="Tourret J."/>
            <person name="Vacherie B."/>
            <person name="Vallenet D."/>
            <person name="Medigue C."/>
            <person name="Rocha E.P.C."/>
            <person name="Denamur E."/>
        </authorList>
    </citation>
    <scope>NUCLEOTIDE SEQUENCE [LARGE SCALE GENOMIC DNA]</scope>
    <source>
        <strain>55989 / EAEC</strain>
    </source>
</reference>
<feature type="chain" id="PRO_1000193448" description="Soluble pyridine nucleotide transhydrogenase">
    <location>
        <begin position="1"/>
        <end position="466"/>
    </location>
</feature>
<feature type="binding site" evidence="1">
    <location>
        <begin position="36"/>
        <end position="45"/>
    </location>
    <ligand>
        <name>FAD</name>
        <dbReference type="ChEBI" id="CHEBI:57692"/>
    </ligand>
</feature>
<name>STHA_ECO55</name>
<comment type="function">
    <text evidence="1">Conversion of NADPH, generated by peripheral catabolic pathways, to NADH, which can enter the respiratory chain for energy generation.</text>
</comment>
<comment type="catalytic activity">
    <reaction evidence="1">
        <text>NAD(+) + NADPH = NADH + NADP(+)</text>
        <dbReference type="Rhea" id="RHEA:11692"/>
        <dbReference type="ChEBI" id="CHEBI:57540"/>
        <dbReference type="ChEBI" id="CHEBI:57783"/>
        <dbReference type="ChEBI" id="CHEBI:57945"/>
        <dbReference type="ChEBI" id="CHEBI:58349"/>
        <dbReference type="EC" id="1.6.1.1"/>
    </reaction>
</comment>
<comment type="cofactor">
    <cofactor evidence="1">
        <name>FAD</name>
        <dbReference type="ChEBI" id="CHEBI:57692"/>
    </cofactor>
    <text evidence="1">Binds 1 FAD per subunit.</text>
</comment>
<comment type="subcellular location">
    <subcellularLocation>
        <location evidence="1">Cytoplasm</location>
    </subcellularLocation>
</comment>
<comment type="similarity">
    <text evidence="1">Belongs to the class-I pyridine nucleotide-disulfide oxidoreductase family.</text>
</comment>
<evidence type="ECO:0000255" key="1">
    <source>
        <dbReference type="HAMAP-Rule" id="MF_00247"/>
    </source>
</evidence>
<keyword id="KW-0963">Cytoplasm</keyword>
<keyword id="KW-0274">FAD</keyword>
<keyword id="KW-0285">Flavoprotein</keyword>
<keyword id="KW-0520">NAD</keyword>
<keyword id="KW-0521">NADP</keyword>
<keyword id="KW-0560">Oxidoreductase</keyword>
<keyword id="KW-1185">Reference proteome</keyword>
<protein>
    <recommendedName>
        <fullName evidence="1">Soluble pyridine nucleotide transhydrogenase</fullName>
        <shortName evidence="1">STH</shortName>
        <ecNumber evidence="1">1.6.1.1</ecNumber>
    </recommendedName>
    <alternativeName>
        <fullName evidence="1">NAD(P)(+) transhydrogenase [B-specific]</fullName>
    </alternativeName>
</protein>
<organism>
    <name type="scientific">Escherichia coli (strain 55989 / EAEC)</name>
    <dbReference type="NCBI Taxonomy" id="585055"/>
    <lineage>
        <taxon>Bacteria</taxon>
        <taxon>Pseudomonadati</taxon>
        <taxon>Pseudomonadota</taxon>
        <taxon>Gammaproteobacteria</taxon>
        <taxon>Enterobacterales</taxon>
        <taxon>Enterobacteriaceae</taxon>
        <taxon>Escherichia</taxon>
    </lineage>
</organism>
<sequence length="466" mass="51560">MPHSYDYDAIVIGSGPGGEGAAMGLVKQGARVAVIERYQNVGGGCTHWGTIPSKALRHAVSRIIEFNQNPLYSDHSRLLRSSFADILNHADNVINQQTRMRQGFYERNHCEILQGNARFVDEHTLALDCPDGSVETLTAEKFVIACGSRPYHPTDVDFTHPRIYDSDSILSMHHEPRHVLIYGAGVIGCEYASIFRGMDVKVDLINTRDRLLAFLDQEMSDSLSYHFWNSGVVIRHNEEYEKIEGCDDGVIMHLKSGKKLKADCLLYANGRTGNTDSLALQNIGLETDSRGQLKVNSMYQTAQPHVYAVGDVIGYPSLASAAYDQGRIAAQALVKGEATAHLIEDIPTGIYTIPEISSVGKTEQQLTAMKVPYEVGRAQFKHLARAQIVGMNVGTLKILFHRETKEILGIHCFGERAAEIIHIGQAIMEQKGGGNTIEYFVNTTFNYPTMAEAYRVAALNGLNRLF</sequence>